<sequence length="123" mass="13807">EVKLVESGGGLVQPGGSLRLSCATSGFTFSAFYMEWVRQPPGKRLEWIAASRNKANDYTTEYSASVKGRFFVSRDTSQSILYLQMNALRAEDTAIYYCARDVYYGYDYWFDVWGAGTTVTVSS</sequence>
<protein>
    <recommendedName>
        <fullName>Ig heavy chain V region HPCG14</fullName>
    </recommendedName>
</protein>
<comment type="miscellaneous">
    <text>This chain was isolated from a myeloma protein that binds phosphorylcholine.</text>
</comment>
<keyword id="KW-1064">Adaptive immunity</keyword>
<keyword id="KW-0903">Direct protein sequencing</keyword>
<keyword id="KW-0374">Hybridoma</keyword>
<keyword id="KW-0391">Immunity</keyword>
<keyword id="KW-1280">Immunoglobulin</keyword>
<keyword id="KW-1185">Reference proteome</keyword>
<proteinExistence type="evidence at protein level"/>
<name>HVM25_MOUSE</name>
<dbReference type="PIR" id="G93256">
    <property type="entry name" value="AVMS14"/>
</dbReference>
<dbReference type="SMR" id="P01794"/>
<dbReference type="FunCoup" id="P01794">
    <property type="interactions" value="544"/>
</dbReference>
<dbReference type="InParanoid" id="P01794"/>
<dbReference type="Proteomes" id="UP000000589">
    <property type="component" value="Unplaced"/>
</dbReference>
<dbReference type="RNAct" id="P01794">
    <property type="molecule type" value="protein"/>
</dbReference>
<dbReference type="GO" id="GO:0005576">
    <property type="term" value="C:extracellular region"/>
    <property type="evidence" value="ECO:0007669"/>
    <property type="project" value="UniProtKB-ARBA"/>
</dbReference>
<dbReference type="GO" id="GO:0019814">
    <property type="term" value="C:immunoglobulin complex"/>
    <property type="evidence" value="ECO:0007669"/>
    <property type="project" value="UniProtKB-KW"/>
</dbReference>
<dbReference type="GO" id="GO:0003823">
    <property type="term" value="F:antigen binding"/>
    <property type="evidence" value="ECO:0000318"/>
    <property type="project" value="GO_Central"/>
</dbReference>
<dbReference type="GO" id="GO:0016064">
    <property type="term" value="P:immunoglobulin mediated immune response"/>
    <property type="evidence" value="ECO:0000318"/>
    <property type="project" value="GO_Central"/>
</dbReference>
<dbReference type="FunFam" id="2.60.40.10:FF:001372">
    <property type="entry name" value="Ig heavy chain V region M603"/>
    <property type="match status" value="1"/>
</dbReference>
<dbReference type="Gene3D" id="2.60.40.10">
    <property type="entry name" value="Immunoglobulins"/>
    <property type="match status" value="1"/>
</dbReference>
<dbReference type="InterPro" id="IPR007110">
    <property type="entry name" value="Ig-like_dom"/>
</dbReference>
<dbReference type="InterPro" id="IPR036179">
    <property type="entry name" value="Ig-like_dom_sf"/>
</dbReference>
<dbReference type="InterPro" id="IPR013783">
    <property type="entry name" value="Ig-like_fold"/>
</dbReference>
<dbReference type="InterPro" id="IPR003599">
    <property type="entry name" value="Ig_sub"/>
</dbReference>
<dbReference type="InterPro" id="IPR013106">
    <property type="entry name" value="Ig_V-set"/>
</dbReference>
<dbReference type="InterPro" id="IPR050199">
    <property type="entry name" value="IgHV"/>
</dbReference>
<dbReference type="PANTHER" id="PTHR23266">
    <property type="entry name" value="IMMUNOGLOBULIN HEAVY CHAIN"/>
    <property type="match status" value="1"/>
</dbReference>
<dbReference type="Pfam" id="PF07686">
    <property type="entry name" value="V-set"/>
    <property type="match status" value="1"/>
</dbReference>
<dbReference type="SMART" id="SM00409">
    <property type="entry name" value="IG"/>
    <property type="match status" value="1"/>
</dbReference>
<dbReference type="SMART" id="SM00406">
    <property type="entry name" value="IGv"/>
    <property type="match status" value="1"/>
</dbReference>
<dbReference type="SUPFAM" id="SSF48726">
    <property type="entry name" value="Immunoglobulin"/>
    <property type="match status" value="1"/>
</dbReference>
<dbReference type="PROSITE" id="PS50835">
    <property type="entry name" value="IG_LIKE"/>
    <property type="match status" value="1"/>
</dbReference>
<organism>
    <name type="scientific">Mus musculus</name>
    <name type="common">Mouse</name>
    <dbReference type="NCBI Taxonomy" id="10090"/>
    <lineage>
        <taxon>Eukaryota</taxon>
        <taxon>Metazoa</taxon>
        <taxon>Chordata</taxon>
        <taxon>Craniata</taxon>
        <taxon>Vertebrata</taxon>
        <taxon>Euteleostomi</taxon>
        <taxon>Mammalia</taxon>
        <taxon>Eutheria</taxon>
        <taxon>Euarchontoglires</taxon>
        <taxon>Glires</taxon>
        <taxon>Rodentia</taxon>
        <taxon>Myomorpha</taxon>
        <taxon>Muroidea</taxon>
        <taxon>Muridae</taxon>
        <taxon>Murinae</taxon>
        <taxon>Mus</taxon>
        <taxon>Mus</taxon>
    </lineage>
</organism>
<accession>P01794</accession>
<reference key="1">
    <citation type="journal article" date="1981" name="Nature">
        <title>IgG antibodies to phosphorylcholine exhibit more diversity than their IgM counterparts.</title>
        <authorList>
            <person name="Gearhart P.J."/>
            <person name="Johnson N.D."/>
            <person name="Douglas R."/>
            <person name="Hood L."/>
        </authorList>
    </citation>
    <scope>PROTEIN SEQUENCE</scope>
</reference>
<feature type="chain" id="PRO_0000059880" description="Ig heavy chain V region HPCG14">
    <location>
        <begin position="1"/>
        <end position="123" status="greater than"/>
    </location>
</feature>
<feature type="domain" description="Ig-like">
    <location>
        <begin position="1"/>
        <end position="114"/>
    </location>
</feature>
<feature type="non-terminal residue">
    <location>
        <position position="123"/>
    </location>
</feature>